<gene>
    <name evidence="1" type="primary">rbfA</name>
    <name type="ordered locus">SYNW2207</name>
</gene>
<name>RBFA_PARMW</name>
<evidence type="ECO:0000255" key="1">
    <source>
        <dbReference type="HAMAP-Rule" id="MF_00003"/>
    </source>
</evidence>
<reference key="1">
    <citation type="journal article" date="2003" name="Nature">
        <title>The genome of a motile marine Synechococcus.</title>
        <authorList>
            <person name="Palenik B."/>
            <person name="Brahamsha B."/>
            <person name="Larimer F.W."/>
            <person name="Land M.L."/>
            <person name="Hauser L."/>
            <person name="Chain P."/>
            <person name="Lamerdin J.E."/>
            <person name="Regala W."/>
            <person name="Allen E.E."/>
            <person name="McCarren J."/>
            <person name="Paulsen I.T."/>
            <person name="Dufresne A."/>
            <person name="Partensky F."/>
            <person name="Webb E.A."/>
            <person name="Waterbury J."/>
        </authorList>
    </citation>
    <scope>NUCLEOTIDE SEQUENCE [LARGE SCALE GENOMIC DNA]</scope>
    <source>
        <strain>WH8102</strain>
    </source>
</reference>
<accession>Q7TTS8</accession>
<feature type="chain" id="PRO_0000102756" description="Ribosome-binding factor A">
    <location>
        <begin position="1"/>
        <end position="134"/>
    </location>
</feature>
<organism>
    <name type="scientific">Parasynechococcus marenigrum (strain WH8102)</name>
    <dbReference type="NCBI Taxonomy" id="84588"/>
    <lineage>
        <taxon>Bacteria</taxon>
        <taxon>Bacillati</taxon>
        <taxon>Cyanobacteriota</taxon>
        <taxon>Cyanophyceae</taxon>
        <taxon>Synechococcales</taxon>
        <taxon>Prochlorococcaceae</taxon>
        <taxon>Parasynechococcus</taxon>
        <taxon>Parasynechococcus marenigrum</taxon>
    </lineage>
</organism>
<comment type="function">
    <text evidence="1">One of several proteins that assist in the late maturation steps of the functional core of the 30S ribosomal subunit. Associates with free 30S ribosomal subunits (but not with 30S subunits that are part of 70S ribosomes or polysomes). Required for efficient processing of 16S rRNA. May interact with the 5'-terminal helix region of 16S rRNA.</text>
</comment>
<comment type="subunit">
    <text evidence="1">Monomer. Binds 30S ribosomal subunits, but not 50S ribosomal subunits or 70S ribosomes.</text>
</comment>
<comment type="subcellular location">
    <subcellularLocation>
        <location evidence="1">Cytoplasm</location>
    </subcellularLocation>
</comment>
<comment type="similarity">
    <text evidence="1">Belongs to the RbfA family.</text>
</comment>
<sequence length="134" mass="14885">MAQGRRVERVAALIRKETSELLINGIRDERVHQGMVSITNVEVSGDLQHCKIFVSIFGDEASQLQVMEGLQAASGYLKGELGRRLQMRRAPDVVFQLDRGIERGTSVLGLLNKLEDERKERGEIPAGSDELPAE</sequence>
<proteinExistence type="inferred from homology"/>
<keyword id="KW-0963">Cytoplasm</keyword>
<keyword id="KW-0690">Ribosome biogenesis</keyword>
<protein>
    <recommendedName>
        <fullName evidence="1">Ribosome-binding factor A</fullName>
    </recommendedName>
</protein>
<dbReference type="EMBL" id="BX569695">
    <property type="protein sequence ID" value="CAE08722.1"/>
    <property type="molecule type" value="Genomic_DNA"/>
</dbReference>
<dbReference type="RefSeq" id="WP_011129063.1">
    <property type="nucleotide sequence ID" value="NC_005070.1"/>
</dbReference>
<dbReference type="SMR" id="Q7TTS8"/>
<dbReference type="STRING" id="84588.SYNW2207"/>
<dbReference type="KEGG" id="syw:SYNW2207"/>
<dbReference type="eggNOG" id="COG0858">
    <property type="taxonomic scope" value="Bacteria"/>
</dbReference>
<dbReference type="HOGENOM" id="CLU_089475_2_1_3"/>
<dbReference type="Proteomes" id="UP000001422">
    <property type="component" value="Chromosome"/>
</dbReference>
<dbReference type="GO" id="GO:0005829">
    <property type="term" value="C:cytosol"/>
    <property type="evidence" value="ECO:0007669"/>
    <property type="project" value="TreeGrafter"/>
</dbReference>
<dbReference type="GO" id="GO:0043024">
    <property type="term" value="F:ribosomal small subunit binding"/>
    <property type="evidence" value="ECO:0007669"/>
    <property type="project" value="TreeGrafter"/>
</dbReference>
<dbReference type="GO" id="GO:0030490">
    <property type="term" value="P:maturation of SSU-rRNA"/>
    <property type="evidence" value="ECO:0007669"/>
    <property type="project" value="UniProtKB-UniRule"/>
</dbReference>
<dbReference type="Gene3D" id="3.30.300.20">
    <property type="match status" value="1"/>
</dbReference>
<dbReference type="HAMAP" id="MF_00003">
    <property type="entry name" value="RbfA"/>
    <property type="match status" value="1"/>
</dbReference>
<dbReference type="InterPro" id="IPR015946">
    <property type="entry name" value="KH_dom-like_a/b"/>
</dbReference>
<dbReference type="InterPro" id="IPR000238">
    <property type="entry name" value="RbfA"/>
</dbReference>
<dbReference type="InterPro" id="IPR023799">
    <property type="entry name" value="RbfA_dom_sf"/>
</dbReference>
<dbReference type="InterPro" id="IPR020053">
    <property type="entry name" value="Ribosome-bd_factorA_CS"/>
</dbReference>
<dbReference type="NCBIfam" id="TIGR00082">
    <property type="entry name" value="rbfA"/>
    <property type="match status" value="1"/>
</dbReference>
<dbReference type="PANTHER" id="PTHR33515">
    <property type="entry name" value="RIBOSOME-BINDING FACTOR A, CHLOROPLASTIC-RELATED"/>
    <property type="match status" value="1"/>
</dbReference>
<dbReference type="PANTHER" id="PTHR33515:SF1">
    <property type="entry name" value="RIBOSOME-BINDING FACTOR A, CHLOROPLASTIC-RELATED"/>
    <property type="match status" value="1"/>
</dbReference>
<dbReference type="Pfam" id="PF02033">
    <property type="entry name" value="RBFA"/>
    <property type="match status" value="1"/>
</dbReference>
<dbReference type="SUPFAM" id="SSF89919">
    <property type="entry name" value="Ribosome-binding factor A, RbfA"/>
    <property type="match status" value="1"/>
</dbReference>
<dbReference type="PROSITE" id="PS01319">
    <property type="entry name" value="RBFA"/>
    <property type="match status" value="1"/>
</dbReference>